<name>RS4_PECCP</name>
<reference key="1">
    <citation type="submission" date="2009-07" db="EMBL/GenBank/DDBJ databases">
        <title>Complete sequence of Pectobacterium carotovorum subsp. carotovorum PC1.</title>
        <authorList>
            <consortium name="US DOE Joint Genome Institute"/>
            <person name="Lucas S."/>
            <person name="Copeland A."/>
            <person name="Lapidus A."/>
            <person name="Glavina del Rio T."/>
            <person name="Tice H."/>
            <person name="Bruce D."/>
            <person name="Goodwin L."/>
            <person name="Pitluck S."/>
            <person name="Munk A.C."/>
            <person name="Brettin T."/>
            <person name="Detter J.C."/>
            <person name="Han C."/>
            <person name="Tapia R."/>
            <person name="Larimer F."/>
            <person name="Land M."/>
            <person name="Hauser L."/>
            <person name="Kyrpides N."/>
            <person name="Mikhailova N."/>
            <person name="Balakrishnan V."/>
            <person name="Glasner J."/>
            <person name="Perna N.T."/>
        </authorList>
    </citation>
    <scope>NUCLEOTIDE SEQUENCE [LARGE SCALE GENOMIC DNA]</scope>
    <source>
        <strain>PC1</strain>
    </source>
</reference>
<comment type="function">
    <text evidence="1">One of the primary rRNA binding proteins, it binds directly to 16S rRNA where it nucleates assembly of the body of the 30S subunit.</text>
</comment>
<comment type="function">
    <text evidence="1">With S5 and S12 plays an important role in translational accuracy.</text>
</comment>
<comment type="subunit">
    <text evidence="1">Part of the 30S ribosomal subunit. Contacts protein S5. The interaction surface between S4 and S5 is involved in control of translational fidelity.</text>
</comment>
<comment type="similarity">
    <text evidence="1">Belongs to the universal ribosomal protein uS4 family.</text>
</comment>
<protein>
    <recommendedName>
        <fullName evidence="1">Small ribosomal subunit protein uS4</fullName>
    </recommendedName>
    <alternativeName>
        <fullName evidence="2">30S ribosomal protein S4</fullName>
    </alternativeName>
</protein>
<sequence length="206" mass="23456">MARYLGPKLKLSRREGTDLFLKSGVRAIDSKCKIEQAPGQHGARKPRLSDYGVQLREKQKVRRIYGVLERQFRNYYKEAARLKGNTGANLLQLLEGRLDNVVYRMGFGATRAEARQMVSHKAIMVNGRVVSIASYQVSPNDVVSIREKAKKQSRVKAALELAEQREKPTWLEVDAAKMEGVFKRIPERTDLSADINEHLIVELYSK</sequence>
<evidence type="ECO:0000255" key="1">
    <source>
        <dbReference type="HAMAP-Rule" id="MF_01306"/>
    </source>
</evidence>
<evidence type="ECO:0000305" key="2"/>
<keyword id="KW-0687">Ribonucleoprotein</keyword>
<keyword id="KW-0689">Ribosomal protein</keyword>
<keyword id="KW-0694">RNA-binding</keyword>
<keyword id="KW-0699">rRNA-binding</keyword>
<dbReference type="EMBL" id="CP001657">
    <property type="protein sequence ID" value="ACT14813.1"/>
    <property type="molecule type" value="Genomic_DNA"/>
</dbReference>
<dbReference type="RefSeq" id="WP_010286047.1">
    <property type="nucleotide sequence ID" value="NC_012917.1"/>
</dbReference>
<dbReference type="SMR" id="C6DFS4"/>
<dbReference type="STRING" id="561230.PC1_3798"/>
<dbReference type="GeneID" id="93391956"/>
<dbReference type="KEGG" id="pct:PC1_3798"/>
<dbReference type="eggNOG" id="COG0522">
    <property type="taxonomic scope" value="Bacteria"/>
</dbReference>
<dbReference type="HOGENOM" id="CLU_092403_0_2_6"/>
<dbReference type="OrthoDB" id="9803672at2"/>
<dbReference type="Proteomes" id="UP000002736">
    <property type="component" value="Chromosome"/>
</dbReference>
<dbReference type="GO" id="GO:0015935">
    <property type="term" value="C:small ribosomal subunit"/>
    <property type="evidence" value="ECO:0007669"/>
    <property type="project" value="InterPro"/>
</dbReference>
<dbReference type="GO" id="GO:0019843">
    <property type="term" value="F:rRNA binding"/>
    <property type="evidence" value="ECO:0007669"/>
    <property type="project" value="UniProtKB-UniRule"/>
</dbReference>
<dbReference type="GO" id="GO:0003735">
    <property type="term" value="F:structural constituent of ribosome"/>
    <property type="evidence" value="ECO:0007669"/>
    <property type="project" value="InterPro"/>
</dbReference>
<dbReference type="GO" id="GO:0042274">
    <property type="term" value="P:ribosomal small subunit biogenesis"/>
    <property type="evidence" value="ECO:0007669"/>
    <property type="project" value="TreeGrafter"/>
</dbReference>
<dbReference type="GO" id="GO:0006412">
    <property type="term" value="P:translation"/>
    <property type="evidence" value="ECO:0007669"/>
    <property type="project" value="UniProtKB-UniRule"/>
</dbReference>
<dbReference type="CDD" id="cd00165">
    <property type="entry name" value="S4"/>
    <property type="match status" value="1"/>
</dbReference>
<dbReference type="FunFam" id="1.10.1050.10:FF:000001">
    <property type="entry name" value="30S ribosomal protein S4"/>
    <property type="match status" value="1"/>
</dbReference>
<dbReference type="FunFam" id="3.10.290.10:FF:000001">
    <property type="entry name" value="30S ribosomal protein S4"/>
    <property type="match status" value="1"/>
</dbReference>
<dbReference type="Gene3D" id="1.10.1050.10">
    <property type="entry name" value="Ribosomal Protein S4 Delta 41, Chain A, domain 1"/>
    <property type="match status" value="1"/>
</dbReference>
<dbReference type="Gene3D" id="3.10.290.10">
    <property type="entry name" value="RNA-binding S4 domain"/>
    <property type="match status" value="1"/>
</dbReference>
<dbReference type="HAMAP" id="MF_01306_B">
    <property type="entry name" value="Ribosomal_uS4_B"/>
    <property type="match status" value="1"/>
</dbReference>
<dbReference type="InterPro" id="IPR022801">
    <property type="entry name" value="Ribosomal_uS4"/>
</dbReference>
<dbReference type="InterPro" id="IPR005709">
    <property type="entry name" value="Ribosomal_uS4_bac-type"/>
</dbReference>
<dbReference type="InterPro" id="IPR018079">
    <property type="entry name" value="Ribosomal_uS4_CS"/>
</dbReference>
<dbReference type="InterPro" id="IPR001912">
    <property type="entry name" value="Ribosomal_uS4_N"/>
</dbReference>
<dbReference type="InterPro" id="IPR002942">
    <property type="entry name" value="S4_RNA-bd"/>
</dbReference>
<dbReference type="InterPro" id="IPR036986">
    <property type="entry name" value="S4_RNA-bd_sf"/>
</dbReference>
<dbReference type="NCBIfam" id="NF003717">
    <property type="entry name" value="PRK05327.1"/>
    <property type="match status" value="1"/>
</dbReference>
<dbReference type="NCBIfam" id="TIGR01017">
    <property type="entry name" value="rpsD_bact"/>
    <property type="match status" value="1"/>
</dbReference>
<dbReference type="PANTHER" id="PTHR11831">
    <property type="entry name" value="30S 40S RIBOSOMAL PROTEIN"/>
    <property type="match status" value="1"/>
</dbReference>
<dbReference type="PANTHER" id="PTHR11831:SF4">
    <property type="entry name" value="SMALL RIBOSOMAL SUBUNIT PROTEIN US4M"/>
    <property type="match status" value="1"/>
</dbReference>
<dbReference type="Pfam" id="PF00163">
    <property type="entry name" value="Ribosomal_S4"/>
    <property type="match status" value="1"/>
</dbReference>
<dbReference type="Pfam" id="PF01479">
    <property type="entry name" value="S4"/>
    <property type="match status" value="1"/>
</dbReference>
<dbReference type="SMART" id="SM01390">
    <property type="entry name" value="Ribosomal_S4"/>
    <property type="match status" value="1"/>
</dbReference>
<dbReference type="SMART" id="SM00363">
    <property type="entry name" value="S4"/>
    <property type="match status" value="1"/>
</dbReference>
<dbReference type="SUPFAM" id="SSF55174">
    <property type="entry name" value="Alpha-L RNA-binding motif"/>
    <property type="match status" value="1"/>
</dbReference>
<dbReference type="PROSITE" id="PS00632">
    <property type="entry name" value="RIBOSOMAL_S4"/>
    <property type="match status" value="1"/>
</dbReference>
<dbReference type="PROSITE" id="PS50889">
    <property type="entry name" value="S4"/>
    <property type="match status" value="1"/>
</dbReference>
<proteinExistence type="inferred from homology"/>
<accession>C6DFS4</accession>
<organism>
    <name type="scientific">Pectobacterium carotovorum subsp. carotovorum (strain PC1)</name>
    <dbReference type="NCBI Taxonomy" id="561230"/>
    <lineage>
        <taxon>Bacteria</taxon>
        <taxon>Pseudomonadati</taxon>
        <taxon>Pseudomonadota</taxon>
        <taxon>Gammaproteobacteria</taxon>
        <taxon>Enterobacterales</taxon>
        <taxon>Pectobacteriaceae</taxon>
        <taxon>Pectobacterium</taxon>
    </lineage>
</organism>
<gene>
    <name evidence="1" type="primary">rpsD</name>
    <name type="ordered locus">PC1_3798</name>
</gene>
<feature type="chain" id="PRO_1000214297" description="Small ribosomal subunit protein uS4">
    <location>
        <begin position="1"/>
        <end position="206"/>
    </location>
</feature>
<feature type="domain" description="S4 RNA-binding" evidence="1">
    <location>
        <begin position="96"/>
        <end position="156"/>
    </location>
</feature>